<accession>Q93JL8</accession>
<name>CRGA_STRAW</name>
<organism>
    <name type="scientific">Streptomyces avermitilis (strain ATCC 31267 / DSM 46492 / JCM 5070 / NBRC 14893 / NCIMB 12804 / NRRL 8165 / MA-4680)</name>
    <dbReference type="NCBI Taxonomy" id="227882"/>
    <lineage>
        <taxon>Bacteria</taxon>
        <taxon>Bacillati</taxon>
        <taxon>Actinomycetota</taxon>
        <taxon>Actinomycetes</taxon>
        <taxon>Kitasatosporales</taxon>
        <taxon>Streptomycetaceae</taxon>
        <taxon>Streptomyces</taxon>
    </lineage>
</organism>
<keyword id="KW-0131">Cell cycle</keyword>
<keyword id="KW-0132">Cell division</keyword>
<keyword id="KW-1003">Cell membrane</keyword>
<keyword id="KW-0472">Membrane</keyword>
<keyword id="KW-1185">Reference proteome</keyword>
<keyword id="KW-0812">Transmembrane</keyword>
<keyword id="KW-1133">Transmembrane helix</keyword>
<gene>
    <name evidence="1" type="primary">crgA</name>
    <name type="synonym">whiP</name>
    <name type="ordered locus">SAV_4331</name>
</gene>
<sequence length="84" mass="9227">MPKSRIRKKADYTPPPSKQATNIKLGSRGWVAPVMLAMFLIGLAWIVVFYVTDGSLPIDALDNWNIVVGFGFIAAGFGVSTQWK</sequence>
<protein>
    <recommendedName>
        <fullName evidence="1">Cell division protein CrgA</fullName>
    </recommendedName>
</protein>
<dbReference type="EMBL" id="AJ320280">
    <property type="protein sequence ID" value="CAC47962.1"/>
    <property type="molecule type" value="Genomic_DNA"/>
</dbReference>
<dbReference type="EMBL" id="BA000030">
    <property type="protein sequence ID" value="BAC72043.1"/>
    <property type="molecule type" value="Genomic_DNA"/>
</dbReference>
<dbReference type="RefSeq" id="WP_010985756.1">
    <property type="nucleotide sequence ID" value="NZ_JZJK01000079.1"/>
</dbReference>
<dbReference type="SMR" id="Q93JL8"/>
<dbReference type="DNASU" id="1210957"/>
<dbReference type="GeneID" id="41541413"/>
<dbReference type="KEGG" id="sma:SAVERM_4331"/>
<dbReference type="eggNOG" id="ENOG5032ZHR">
    <property type="taxonomic scope" value="Bacteria"/>
</dbReference>
<dbReference type="HOGENOM" id="CLU_149126_1_0_11"/>
<dbReference type="OrthoDB" id="5189646at2"/>
<dbReference type="Proteomes" id="UP000000428">
    <property type="component" value="Chromosome"/>
</dbReference>
<dbReference type="GO" id="GO:0005886">
    <property type="term" value="C:plasma membrane"/>
    <property type="evidence" value="ECO:0007669"/>
    <property type="project" value="UniProtKB-SubCell"/>
</dbReference>
<dbReference type="GO" id="GO:0051301">
    <property type="term" value="P:cell division"/>
    <property type="evidence" value="ECO:0007669"/>
    <property type="project" value="UniProtKB-UniRule"/>
</dbReference>
<dbReference type="HAMAP" id="MF_00631">
    <property type="entry name" value="CrgA"/>
    <property type="match status" value="1"/>
</dbReference>
<dbReference type="InterPro" id="IPR009619">
    <property type="entry name" value="CrgA"/>
</dbReference>
<dbReference type="NCBIfam" id="NF002595">
    <property type="entry name" value="PRK02251.2-1"/>
    <property type="match status" value="1"/>
</dbReference>
<dbReference type="Pfam" id="PF06781">
    <property type="entry name" value="CrgA"/>
    <property type="match status" value="1"/>
</dbReference>
<evidence type="ECO:0000255" key="1">
    <source>
        <dbReference type="HAMAP-Rule" id="MF_00631"/>
    </source>
</evidence>
<evidence type="ECO:0000269" key="2">
    <source>
    </source>
</evidence>
<feature type="chain" id="PRO_0000216816" description="Cell division protein CrgA">
    <location>
        <begin position="1"/>
        <end position="84"/>
    </location>
</feature>
<feature type="transmembrane region" description="Helical" evidence="1">
    <location>
        <begin position="31"/>
        <end position="51"/>
    </location>
</feature>
<feature type="transmembrane region" description="Helical" evidence="1">
    <location>
        <begin position="60"/>
        <end position="80"/>
    </location>
</feature>
<reference key="1">
    <citation type="submission" date="2001-07" db="EMBL/GenBank/DDBJ databases">
        <title>Improved Tn1792 transposon mutagenesis resulting from cointegrate resolution in Streptomyces avermitilis.</title>
        <authorList>
            <person name="Pitman A."/>
            <person name="Herron P."/>
            <person name="Dyson P."/>
        </authorList>
    </citation>
    <scope>NUCLEOTIDE SEQUENCE [GENOMIC DNA]</scope>
    <source>
        <strain>ATCC 31267 / DSM 46492 / JCM 5070 / NBRC 14893 / NCIMB 12804 / NRRL 8165 / MA-4680</strain>
    </source>
</reference>
<reference key="2">
    <citation type="journal article" date="2001" name="Proc. Natl. Acad. Sci. U.S.A.">
        <title>Genome sequence of an industrial microorganism Streptomyces avermitilis: deducing the ability of producing secondary metabolites.</title>
        <authorList>
            <person name="Omura S."/>
            <person name="Ikeda H."/>
            <person name="Ishikawa J."/>
            <person name="Hanamoto A."/>
            <person name="Takahashi C."/>
            <person name="Shinose M."/>
            <person name="Takahashi Y."/>
            <person name="Horikawa H."/>
            <person name="Nakazawa H."/>
            <person name="Osonoe T."/>
            <person name="Kikuchi H."/>
            <person name="Shiba T."/>
            <person name="Sakaki Y."/>
            <person name="Hattori M."/>
        </authorList>
    </citation>
    <scope>NUCLEOTIDE SEQUENCE [LARGE SCALE GENOMIC DNA]</scope>
    <source>
        <strain>ATCC 31267 / DSM 46492 / JCM 5070 / NBRC 14893 / NCIMB 12804 / NRRL 8165 / MA-4680</strain>
    </source>
</reference>
<reference key="3">
    <citation type="journal article" date="2003" name="Nat. Biotechnol.">
        <title>Complete genome sequence and comparative analysis of the industrial microorganism Streptomyces avermitilis.</title>
        <authorList>
            <person name="Ikeda H."/>
            <person name="Ishikawa J."/>
            <person name="Hanamoto A."/>
            <person name="Shinose M."/>
            <person name="Kikuchi H."/>
            <person name="Shiba T."/>
            <person name="Sakaki Y."/>
            <person name="Hattori M."/>
            <person name="Omura S."/>
        </authorList>
    </citation>
    <scope>NUCLEOTIDE SEQUENCE [LARGE SCALE GENOMIC DNA]</scope>
    <source>
        <strain>ATCC 31267 / DSM 46492 / JCM 5070 / NBRC 14893 / NCIMB 12804 / NRRL 8165 / MA-4680</strain>
    </source>
</reference>
<reference key="4">
    <citation type="journal article" date="2003" name="J. Bacteriol.">
        <title>The product of a developmental gene, crgA, that coordinates reproductive growth in Streptomyces belongs to a novel family of small actinomycete-specific proteins.</title>
        <authorList>
            <person name="Del Sol R."/>
            <person name="Pitman A."/>
            <person name="Herron P."/>
            <person name="Dyson P."/>
        </authorList>
    </citation>
    <scope>FUNCTION</scope>
    <scope>DISRUPTION PHENOTYPE</scope>
    <scope>GENE NAME</scope>
    <source>
        <strain>ATCC 31267 / DSM 46492 / JCM 5070 / NBRC 14893 / NCIMB 12804 / NRRL 8165 / MA-4680</strain>
    </source>
</reference>
<proteinExistence type="inferred from homology"/>
<comment type="function">
    <text evidence="1 2">Involved in cell division. Coordinates growth and cell division. Required for the formation of the sporulation septa.</text>
</comment>
<comment type="subcellular location">
    <subcellularLocation>
        <location evidence="1">Cell membrane</location>
        <topology evidence="1">Multi-pass membrane protein</topology>
    </subcellularLocation>
</comment>
<comment type="disruption phenotype">
    <text evidence="2">Inactivation of the gene abolishes most sporulation septation in aerial hyphae.</text>
</comment>
<comment type="similarity">
    <text evidence="1">Belongs to the CrgA family.</text>
</comment>